<sequence length="323" mass="35490">MLDIAMPKIEVVTAAENYGRFKIEPLDPGYGHTLGNALRRVLLSSIPGAAITKIKIEGVFHEFSTIPGVKEDVTEIVLNIKGIRLRSYAERPVKISLSKRGAGVVRAADIDAPSNVEIVNPNHYICTIDRDDAAIDMEMTVERGRGYLPADQRDALPIGEIPIDAIFTPVPKVNYVVEHIRVGQATDIDSLLIEIWTDGTIKPGDALSHAAQVLVQYSQTIADFNRLSTEAEPTTAPNGLAIPADIYDTPIEELDLSTRTYNCLKRADITKVGQVLEMDEKALLSVRNLGQKSMEEIRDKLIERGYIPRIGQTSHAARAEIEG</sequence>
<proteinExistence type="inferred from homology"/>
<organism>
    <name type="scientific">Roseiflexus sp. (strain RS-1)</name>
    <dbReference type="NCBI Taxonomy" id="357808"/>
    <lineage>
        <taxon>Bacteria</taxon>
        <taxon>Bacillati</taxon>
        <taxon>Chloroflexota</taxon>
        <taxon>Chloroflexia</taxon>
        <taxon>Chloroflexales</taxon>
        <taxon>Roseiflexineae</taxon>
        <taxon>Roseiflexaceae</taxon>
        <taxon>Roseiflexus</taxon>
    </lineage>
</organism>
<keyword id="KW-0240">DNA-directed RNA polymerase</keyword>
<keyword id="KW-0548">Nucleotidyltransferase</keyword>
<keyword id="KW-0804">Transcription</keyword>
<keyword id="KW-0808">Transferase</keyword>
<protein>
    <recommendedName>
        <fullName evidence="1">DNA-directed RNA polymerase subunit alpha</fullName>
        <shortName evidence="1">RNAP subunit alpha</shortName>
        <ecNumber evidence="1">2.7.7.6</ecNumber>
    </recommendedName>
    <alternativeName>
        <fullName evidence="1">RNA polymerase subunit alpha</fullName>
    </alternativeName>
    <alternativeName>
        <fullName evidence="1">Transcriptase subunit alpha</fullName>
    </alternativeName>
</protein>
<name>RPOA_ROSS1</name>
<comment type="function">
    <text evidence="1">DNA-dependent RNA polymerase catalyzes the transcription of DNA into RNA using the four ribonucleoside triphosphates as substrates.</text>
</comment>
<comment type="catalytic activity">
    <reaction evidence="1">
        <text>RNA(n) + a ribonucleoside 5'-triphosphate = RNA(n+1) + diphosphate</text>
        <dbReference type="Rhea" id="RHEA:21248"/>
        <dbReference type="Rhea" id="RHEA-COMP:14527"/>
        <dbReference type="Rhea" id="RHEA-COMP:17342"/>
        <dbReference type="ChEBI" id="CHEBI:33019"/>
        <dbReference type="ChEBI" id="CHEBI:61557"/>
        <dbReference type="ChEBI" id="CHEBI:140395"/>
        <dbReference type="EC" id="2.7.7.6"/>
    </reaction>
</comment>
<comment type="subunit">
    <text evidence="1">Homodimer. The RNAP catalytic core consists of 2 alpha, 1 beta, 1 beta' and 1 omega subunit. When a sigma factor is associated with the core the holoenzyme is formed, which can initiate transcription.</text>
</comment>
<comment type="domain">
    <text evidence="1">The N-terminal domain is essential for RNAP assembly and basal transcription, whereas the C-terminal domain is involved in interaction with transcriptional regulators and with upstream promoter elements.</text>
</comment>
<comment type="similarity">
    <text evidence="1">Belongs to the RNA polymerase alpha chain family.</text>
</comment>
<feature type="chain" id="PRO_0000323650" description="DNA-directed RNA polymerase subunit alpha">
    <location>
        <begin position="1"/>
        <end position="323"/>
    </location>
</feature>
<feature type="region of interest" description="Alpha N-terminal domain (alpha-NTD)" evidence="1">
    <location>
        <begin position="1"/>
        <end position="225"/>
    </location>
</feature>
<feature type="region of interest" description="Alpha C-terminal domain (alpha-CTD)" evidence="1">
    <location>
        <begin position="246"/>
        <end position="323"/>
    </location>
</feature>
<dbReference type="EC" id="2.7.7.6" evidence="1"/>
<dbReference type="EMBL" id="CP000686">
    <property type="protein sequence ID" value="ABQ89565.1"/>
    <property type="molecule type" value="Genomic_DNA"/>
</dbReference>
<dbReference type="RefSeq" id="WP_011955918.1">
    <property type="nucleotide sequence ID" value="NC_009523.1"/>
</dbReference>
<dbReference type="SMR" id="A5USG2"/>
<dbReference type="STRING" id="357808.RoseRS_1158"/>
<dbReference type="KEGG" id="rrs:RoseRS_1158"/>
<dbReference type="eggNOG" id="COG0202">
    <property type="taxonomic scope" value="Bacteria"/>
</dbReference>
<dbReference type="HOGENOM" id="CLU_053084_0_1_0"/>
<dbReference type="OrthoDB" id="9805706at2"/>
<dbReference type="Proteomes" id="UP000006554">
    <property type="component" value="Chromosome"/>
</dbReference>
<dbReference type="GO" id="GO:0005737">
    <property type="term" value="C:cytoplasm"/>
    <property type="evidence" value="ECO:0007669"/>
    <property type="project" value="UniProtKB-ARBA"/>
</dbReference>
<dbReference type="GO" id="GO:0000428">
    <property type="term" value="C:DNA-directed RNA polymerase complex"/>
    <property type="evidence" value="ECO:0007669"/>
    <property type="project" value="UniProtKB-KW"/>
</dbReference>
<dbReference type="GO" id="GO:0003677">
    <property type="term" value="F:DNA binding"/>
    <property type="evidence" value="ECO:0007669"/>
    <property type="project" value="UniProtKB-UniRule"/>
</dbReference>
<dbReference type="GO" id="GO:0003899">
    <property type="term" value="F:DNA-directed RNA polymerase activity"/>
    <property type="evidence" value="ECO:0007669"/>
    <property type="project" value="UniProtKB-UniRule"/>
</dbReference>
<dbReference type="GO" id="GO:0046983">
    <property type="term" value="F:protein dimerization activity"/>
    <property type="evidence" value="ECO:0007669"/>
    <property type="project" value="InterPro"/>
</dbReference>
<dbReference type="GO" id="GO:0006351">
    <property type="term" value="P:DNA-templated transcription"/>
    <property type="evidence" value="ECO:0007669"/>
    <property type="project" value="UniProtKB-UniRule"/>
</dbReference>
<dbReference type="CDD" id="cd06928">
    <property type="entry name" value="RNAP_alpha_NTD"/>
    <property type="match status" value="1"/>
</dbReference>
<dbReference type="FunFam" id="2.170.120.12:FF:000001">
    <property type="entry name" value="DNA-directed RNA polymerase subunit alpha"/>
    <property type="match status" value="1"/>
</dbReference>
<dbReference type="Gene3D" id="1.10.150.20">
    <property type="entry name" value="5' to 3' exonuclease, C-terminal subdomain"/>
    <property type="match status" value="1"/>
</dbReference>
<dbReference type="Gene3D" id="2.170.120.12">
    <property type="entry name" value="DNA-directed RNA polymerase, insert domain"/>
    <property type="match status" value="1"/>
</dbReference>
<dbReference type="Gene3D" id="3.30.1360.10">
    <property type="entry name" value="RNA polymerase, RBP11-like subunit"/>
    <property type="match status" value="1"/>
</dbReference>
<dbReference type="HAMAP" id="MF_00059">
    <property type="entry name" value="RNApol_bact_RpoA"/>
    <property type="match status" value="1"/>
</dbReference>
<dbReference type="InterPro" id="IPR011262">
    <property type="entry name" value="DNA-dir_RNA_pol_insert"/>
</dbReference>
<dbReference type="InterPro" id="IPR011263">
    <property type="entry name" value="DNA-dir_RNA_pol_RpoA/D/Rpb3"/>
</dbReference>
<dbReference type="InterPro" id="IPR011773">
    <property type="entry name" value="DNA-dir_RpoA"/>
</dbReference>
<dbReference type="InterPro" id="IPR036603">
    <property type="entry name" value="RBP11-like"/>
</dbReference>
<dbReference type="InterPro" id="IPR011260">
    <property type="entry name" value="RNAP_asu_C"/>
</dbReference>
<dbReference type="InterPro" id="IPR036643">
    <property type="entry name" value="RNApol_insert_sf"/>
</dbReference>
<dbReference type="NCBIfam" id="NF003513">
    <property type="entry name" value="PRK05182.1-2"/>
    <property type="match status" value="1"/>
</dbReference>
<dbReference type="NCBIfam" id="NF003519">
    <property type="entry name" value="PRK05182.2-5"/>
    <property type="match status" value="1"/>
</dbReference>
<dbReference type="NCBIfam" id="TIGR02027">
    <property type="entry name" value="rpoA"/>
    <property type="match status" value="1"/>
</dbReference>
<dbReference type="Pfam" id="PF01000">
    <property type="entry name" value="RNA_pol_A_bac"/>
    <property type="match status" value="1"/>
</dbReference>
<dbReference type="Pfam" id="PF03118">
    <property type="entry name" value="RNA_pol_A_CTD"/>
    <property type="match status" value="1"/>
</dbReference>
<dbReference type="Pfam" id="PF01193">
    <property type="entry name" value="RNA_pol_L"/>
    <property type="match status" value="1"/>
</dbReference>
<dbReference type="SMART" id="SM00662">
    <property type="entry name" value="RPOLD"/>
    <property type="match status" value="1"/>
</dbReference>
<dbReference type="SUPFAM" id="SSF47789">
    <property type="entry name" value="C-terminal domain of RNA polymerase alpha subunit"/>
    <property type="match status" value="1"/>
</dbReference>
<dbReference type="SUPFAM" id="SSF56553">
    <property type="entry name" value="Insert subdomain of RNA polymerase alpha subunit"/>
    <property type="match status" value="1"/>
</dbReference>
<dbReference type="SUPFAM" id="SSF55257">
    <property type="entry name" value="RBP11-like subunits of RNA polymerase"/>
    <property type="match status" value="1"/>
</dbReference>
<reference key="1">
    <citation type="submission" date="2007-04" db="EMBL/GenBank/DDBJ databases">
        <title>Complete sequence of Roseiflexus sp. RS-1.</title>
        <authorList>
            <consortium name="US DOE Joint Genome Institute"/>
            <person name="Copeland A."/>
            <person name="Lucas S."/>
            <person name="Lapidus A."/>
            <person name="Barry K."/>
            <person name="Detter J.C."/>
            <person name="Glavina del Rio T."/>
            <person name="Hammon N."/>
            <person name="Israni S."/>
            <person name="Dalin E."/>
            <person name="Tice H."/>
            <person name="Pitluck S."/>
            <person name="Chertkov O."/>
            <person name="Brettin T."/>
            <person name="Bruce D."/>
            <person name="Han C."/>
            <person name="Schmutz J."/>
            <person name="Larimer F."/>
            <person name="Land M."/>
            <person name="Hauser L."/>
            <person name="Kyrpides N."/>
            <person name="Mikhailova N."/>
            <person name="Bryant D.A."/>
            <person name="Richardson P."/>
        </authorList>
    </citation>
    <scope>NUCLEOTIDE SEQUENCE [LARGE SCALE GENOMIC DNA]</scope>
    <source>
        <strain>RS-1</strain>
    </source>
</reference>
<accession>A5USG2</accession>
<gene>
    <name evidence="1" type="primary">rpoA</name>
    <name type="ordered locus">RoseRS_1158</name>
</gene>
<evidence type="ECO:0000255" key="1">
    <source>
        <dbReference type="HAMAP-Rule" id="MF_00059"/>
    </source>
</evidence>